<evidence type="ECO:0000255" key="1">
    <source>
        <dbReference type="HAMAP-Rule" id="MF_00073"/>
    </source>
</evidence>
<evidence type="ECO:0000269" key="2">
    <source>
    </source>
</evidence>
<evidence type="ECO:0000269" key="3">
    <source>
    </source>
</evidence>
<evidence type="ECO:0000303" key="4">
    <source>
    </source>
</evidence>
<evidence type="ECO:0000305" key="5"/>
<evidence type="ECO:0007829" key="6">
    <source>
        <dbReference type="PDB" id="1EYV"/>
    </source>
</evidence>
<feature type="chain" id="PRO_0000176557" description="Transcription antitermination protein NusB">
    <location>
        <begin position="1"/>
        <end position="156"/>
    </location>
</feature>
<feature type="helix" evidence="6">
    <location>
        <begin position="10"/>
        <end position="27"/>
    </location>
</feature>
<feature type="helix" evidence="6">
    <location>
        <begin position="31"/>
        <end position="44"/>
    </location>
</feature>
<feature type="helix" evidence="6">
    <location>
        <begin position="53"/>
        <end position="64"/>
    </location>
</feature>
<feature type="helix" evidence="6">
    <location>
        <begin position="66"/>
        <end position="74"/>
    </location>
</feature>
<feature type="helix" evidence="6">
    <location>
        <begin position="82"/>
        <end position="84"/>
    </location>
</feature>
<feature type="helix" evidence="6">
    <location>
        <begin position="87"/>
        <end position="102"/>
    </location>
</feature>
<feature type="helix" evidence="6">
    <location>
        <begin position="108"/>
        <end position="122"/>
    </location>
</feature>
<feature type="helix" evidence="6">
    <location>
        <begin position="127"/>
        <end position="138"/>
    </location>
</feature>
<protein>
    <recommendedName>
        <fullName evidence="1">Transcription antitermination protein NusB</fullName>
    </recommendedName>
    <alternativeName>
        <fullName evidence="1">Antitermination factor NusB</fullName>
    </alternativeName>
</protein>
<keyword id="KW-0002">3D-structure</keyword>
<keyword id="KW-1185">Reference proteome</keyword>
<keyword id="KW-0694">RNA-binding</keyword>
<keyword id="KW-0804">Transcription</keyword>
<keyword id="KW-0889">Transcription antitermination</keyword>
<keyword id="KW-0805">Transcription regulation</keyword>
<name>NUSB_MYCTU</name>
<organism>
    <name type="scientific">Mycobacterium tuberculosis (strain ATCC 25618 / H37Rv)</name>
    <dbReference type="NCBI Taxonomy" id="83332"/>
    <lineage>
        <taxon>Bacteria</taxon>
        <taxon>Bacillati</taxon>
        <taxon>Actinomycetota</taxon>
        <taxon>Actinomycetes</taxon>
        <taxon>Mycobacteriales</taxon>
        <taxon>Mycobacteriaceae</taxon>
        <taxon>Mycobacterium</taxon>
        <taxon>Mycobacterium tuberculosis complex</taxon>
    </lineage>
</organism>
<dbReference type="EMBL" id="AL123456">
    <property type="protein sequence ID" value="CCP45328.1"/>
    <property type="molecule type" value="Genomic_DNA"/>
</dbReference>
<dbReference type="PIR" id="A70658">
    <property type="entry name" value="A70658"/>
</dbReference>
<dbReference type="RefSeq" id="NP_217049.1">
    <property type="nucleotide sequence ID" value="NC_000962.3"/>
</dbReference>
<dbReference type="RefSeq" id="WP_003899364.1">
    <property type="nucleotide sequence ID" value="NZ_NVQJ01000032.1"/>
</dbReference>
<dbReference type="PDB" id="1EYV">
    <property type="method" value="X-ray"/>
    <property type="resolution" value="1.60 A"/>
    <property type="chains" value="A/B=1-156"/>
</dbReference>
<dbReference type="PDBsum" id="1EYV"/>
<dbReference type="SMR" id="P9WIV1"/>
<dbReference type="FunCoup" id="P9WIV1">
    <property type="interactions" value="48"/>
</dbReference>
<dbReference type="STRING" id="83332.Rv2533c"/>
<dbReference type="PaxDb" id="83332-Rv2533c"/>
<dbReference type="GeneID" id="887359"/>
<dbReference type="KEGG" id="mtu:Rv2533c"/>
<dbReference type="KEGG" id="mtv:RVBD_2533c"/>
<dbReference type="TubercuList" id="Rv2533c"/>
<dbReference type="eggNOG" id="COG0781">
    <property type="taxonomic scope" value="Bacteria"/>
</dbReference>
<dbReference type="InParanoid" id="P9WIV1"/>
<dbReference type="OrthoDB" id="3528057at2"/>
<dbReference type="PhylomeDB" id="P9WIV1"/>
<dbReference type="EvolutionaryTrace" id="P9WIV1"/>
<dbReference type="Proteomes" id="UP000001584">
    <property type="component" value="Chromosome"/>
</dbReference>
<dbReference type="GO" id="GO:0005829">
    <property type="term" value="C:cytosol"/>
    <property type="evidence" value="ECO:0000318"/>
    <property type="project" value="GO_Central"/>
</dbReference>
<dbReference type="GO" id="GO:0003723">
    <property type="term" value="F:RNA binding"/>
    <property type="evidence" value="ECO:0007669"/>
    <property type="project" value="UniProtKB-UniRule"/>
</dbReference>
<dbReference type="GO" id="GO:0006353">
    <property type="term" value="P:DNA-templated transcription termination"/>
    <property type="evidence" value="ECO:0007669"/>
    <property type="project" value="UniProtKB-UniRule"/>
</dbReference>
<dbReference type="GO" id="GO:0031564">
    <property type="term" value="P:transcription antitermination"/>
    <property type="evidence" value="ECO:0007669"/>
    <property type="project" value="UniProtKB-KW"/>
</dbReference>
<dbReference type="CDD" id="cd00619">
    <property type="entry name" value="Terminator_NusB"/>
    <property type="match status" value="1"/>
</dbReference>
<dbReference type="Gene3D" id="1.10.940.10">
    <property type="entry name" value="NusB-like"/>
    <property type="match status" value="1"/>
</dbReference>
<dbReference type="HAMAP" id="MF_00073">
    <property type="entry name" value="NusB"/>
    <property type="match status" value="1"/>
</dbReference>
<dbReference type="InterPro" id="IPR035926">
    <property type="entry name" value="NusB-like_sf"/>
</dbReference>
<dbReference type="InterPro" id="IPR011605">
    <property type="entry name" value="NusB_fam"/>
</dbReference>
<dbReference type="InterPro" id="IPR006027">
    <property type="entry name" value="NusB_RsmB_TIM44"/>
</dbReference>
<dbReference type="NCBIfam" id="TIGR01951">
    <property type="entry name" value="nusB"/>
    <property type="match status" value="1"/>
</dbReference>
<dbReference type="PANTHER" id="PTHR11078:SF3">
    <property type="entry name" value="ANTITERMINATION NUSB DOMAIN-CONTAINING PROTEIN"/>
    <property type="match status" value="1"/>
</dbReference>
<dbReference type="PANTHER" id="PTHR11078">
    <property type="entry name" value="N UTILIZATION SUBSTANCE PROTEIN B-RELATED"/>
    <property type="match status" value="1"/>
</dbReference>
<dbReference type="Pfam" id="PF01029">
    <property type="entry name" value="NusB"/>
    <property type="match status" value="1"/>
</dbReference>
<dbReference type="SUPFAM" id="SSF48013">
    <property type="entry name" value="NusB-like"/>
    <property type="match status" value="1"/>
</dbReference>
<reference key="1">
    <citation type="journal article" date="1998" name="Nature">
        <title>Deciphering the biology of Mycobacterium tuberculosis from the complete genome sequence.</title>
        <authorList>
            <person name="Cole S.T."/>
            <person name="Brosch R."/>
            <person name="Parkhill J."/>
            <person name="Garnier T."/>
            <person name="Churcher C.M."/>
            <person name="Harris D.E."/>
            <person name="Gordon S.V."/>
            <person name="Eiglmeier K."/>
            <person name="Gas S."/>
            <person name="Barry C.E. III"/>
            <person name="Tekaia F."/>
            <person name="Badcock K."/>
            <person name="Basham D."/>
            <person name="Brown D."/>
            <person name="Chillingworth T."/>
            <person name="Connor R."/>
            <person name="Davies R.M."/>
            <person name="Devlin K."/>
            <person name="Feltwell T."/>
            <person name="Gentles S."/>
            <person name="Hamlin N."/>
            <person name="Holroyd S."/>
            <person name="Hornsby T."/>
            <person name="Jagels K."/>
            <person name="Krogh A."/>
            <person name="McLean J."/>
            <person name="Moule S."/>
            <person name="Murphy L.D."/>
            <person name="Oliver S."/>
            <person name="Osborne J."/>
            <person name="Quail M.A."/>
            <person name="Rajandream M.A."/>
            <person name="Rogers J."/>
            <person name="Rutter S."/>
            <person name="Seeger K."/>
            <person name="Skelton S."/>
            <person name="Squares S."/>
            <person name="Squares R."/>
            <person name="Sulston J.E."/>
            <person name="Taylor K."/>
            <person name="Whitehead S."/>
            <person name="Barrell B.G."/>
        </authorList>
    </citation>
    <scope>NUCLEOTIDE SEQUENCE [LARGE SCALE GENOMIC DNA]</scope>
    <source>
        <strain>ATCC 25618 / H37Rv</strain>
    </source>
</reference>
<reference key="2">
    <citation type="journal article" date="2008" name="BMC Syst. Biol.">
        <title>targetTB: a target identification pipeline for Mycobacterium tuberculosis through an interactome, reactome and genome-scale structural analysis.</title>
        <authorList>
            <person name="Raman K."/>
            <person name="Yeturu K."/>
            <person name="Chandra N."/>
        </authorList>
    </citation>
    <scope>IDENTIFICATION AS A DRUG TARGET [LARGE SCALE ANALYSIS]</scope>
</reference>
<reference key="3">
    <citation type="journal article" date="2011" name="Mol. Cell. Proteomics">
        <title>Proteogenomic analysis of Mycobacterium tuberculosis by high resolution mass spectrometry.</title>
        <authorList>
            <person name="Kelkar D.S."/>
            <person name="Kumar D."/>
            <person name="Kumar P."/>
            <person name="Balakrishnan L."/>
            <person name="Muthusamy B."/>
            <person name="Yadav A.K."/>
            <person name="Shrivastava P."/>
            <person name="Marimuthu A."/>
            <person name="Anand S."/>
            <person name="Sundaram H."/>
            <person name="Kingsbury R."/>
            <person name="Harsha H.C."/>
            <person name="Nair B."/>
            <person name="Prasad T.S."/>
            <person name="Chauhan D.S."/>
            <person name="Katoch K."/>
            <person name="Katoch V.M."/>
            <person name="Kumar P."/>
            <person name="Chaerkady R."/>
            <person name="Ramachandran S."/>
            <person name="Dash D."/>
            <person name="Pandey A."/>
        </authorList>
    </citation>
    <scope>IDENTIFICATION BY MASS SPECTROMETRY [LARGE SCALE ANALYSIS]</scope>
    <source>
        <strain>ATCC 25618 / H37Rv</strain>
    </source>
</reference>
<reference key="4">
    <citation type="journal article" date="2000" name="Nat. Struct. Biol.">
        <title>The crystal structure of NusB from Mycobacterium tuberculosis.</title>
        <authorList>
            <person name="Gopal B."/>
            <person name="Haire L.F."/>
            <person name="Cox R.A."/>
            <person name="Colston M.J."/>
            <person name="Major S."/>
            <person name="Brannigan J.A."/>
            <person name="Smerdon S.J."/>
            <person name="Dodson G."/>
        </authorList>
    </citation>
    <scope>X-RAY CRYSTALLOGRAPHY (1.6 ANGSTROMS)</scope>
    <scope>SUBUNIT</scope>
</reference>
<comment type="function">
    <text evidence="1">Involved in transcription antitermination. Required for transcription of ribosomal RNA (rRNA) genes. Binds specifically to the boxA antiterminator sequence of the ribosomal RNA (rrn) operons.</text>
</comment>
<comment type="subunit">
    <text evidence="2">Homodimer.</text>
</comment>
<comment type="miscellaneous">
    <text evidence="3">Was identified as a high-confidence drug target.</text>
</comment>
<comment type="similarity">
    <text evidence="1 5">Belongs to the NusB family.</text>
</comment>
<proteinExistence type="evidence at protein level"/>
<accession>P9WIV1</accession>
<accession>L0TCN2</accession>
<accession>P95020</accession>
<gene>
    <name evidence="1 4" type="primary">nusB</name>
    <name type="ordered locus">Rv2533c</name>
    <name type="ORF">MTCY159.23</name>
</gene>
<sequence>MSDRKPVRGRHQARKRAVALLFEAEVRGISAAEVVDTRAALAEAKPDIARLHPYTAAVARGVSEHAAHIDDLITAHLRGWTLDRLPAVDRAILRVSVWELLHAADVPEPVVVDEAVQLAKELSTDDSPGFVNGVLGQVMLVTPQLRAAAQAVRGGA</sequence>